<evidence type="ECO:0000255" key="1"/>
<evidence type="ECO:0000305" key="2"/>
<comment type="catalytic activity">
    <reaction>
        <text>dTMP + ATP = dTDP + ADP</text>
        <dbReference type="Rhea" id="RHEA:13517"/>
        <dbReference type="ChEBI" id="CHEBI:30616"/>
        <dbReference type="ChEBI" id="CHEBI:58369"/>
        <dbReference type="ChEBI" id="CHEBI:63528"/>
        <dbReference type="ChEBI" id="CHEBI:456216"/>
        <dbReference type="EC" id="2.7.4.9"/>
    </reaction>
</comment>
<comment type="similarity">
    <text evidence="2">Belongs to the thymidylate kinase family.</text>
</comment>
<accession>Q57741</accession>
<feature type="chain" id="PRO_0000155386" description="Probable thymidylate kinase">
    <location>
        <begin position="1"/>
        <end position="188"/>
    </location>
</feature>
<feature type="binding site" evidence="1">
    <location>
        <begin position="11"/>
        <end position="18"/>
    </location>
    <ligand>
        <name>ATP</name>
        <dbReference type="ChEBI" id="CHEBI:30616"/>
    </ligand>
</feature>
<protein>
    <recommendedName>
        <fullName>Probable thymidylate kinase</fullName>
        <ecNumber>2.7.4.9</ecNumber>
    </recommendedName>
    <alternativeName>
        <fullName>dTMP kinase</fullName>
    </alternativeName>
</protein>
<organism>
    <name type="scientific">Methanocaldococcus jannaschii (strain ATCC 43067 / DSM 2661 / JAL-1 / JCM 10045 / NBRC 100440)</name>
    <name type="common">Methanococcus jannaschii</name>
    <dbReference type="NCBI Taxonomy" id="243232"/>
    <lineage>
        <taxon>Archaea</taxon>
        <taxon>Methanobacteriati</taxon>
        <taxon>Methanobacteriota</taxon>
        <taxon>Methanomada group</taxon>
        <taxon>Methanococci</taxon>
        <taxon>Methanococcales</taxon>
        <taxon>Methanocaldococcaceae</taxon>
        <taxon>Methanocaldococcus</taxon>
    </lineage>
</organism>
<sequence length="188" mass="21687">MVDNMFIVFEGIDGSGKTTQSKLLAKKMDAFWTYEPSNSLVGKIIREILSGKTEVDNKTLALLFAADRIEHTKLIKEELKKRDVVCDRYLYSSIAYQSVAGVDENFIKSINRYALKPDIVFLLIVDIETALKRVKTKDIFEKKDFLKKVQDKYLELAEEYNFIVIDTTKKSVEEVHNEIIGYLKNIPH</sequence>
<dbReference type="EC" id="2.7.4.9"/>
<dbReference type="EMBL" id="L77117">
    <property type="protein sequence ID" value="AAB98278.1"/>
    <property type="molecule type" value="Genomic_DNA"/>
</dbReference>
<dbReference type="PIR" id="F64336">
    <property type="entry name" value="F64336"/>
</dbReference>
<dbReference type="SMR" id="Q57741"/>
<dbReference type="FunCoup" id="Q57741">
    <property type="interactions" value="154"/>
</dbReference>
<dbReference type="STRING" id="243232.MJ_0293"/>
<dbReference type="PaxDb" id="243232-MJ_0293"/>
<dbReference type="EnsemblBacteria" id="AAB98278">
    <property type="protein sequence ID" value="AAB98278"/>
    <property type="gene ID" value="MJ_0293"/>
</dbReference>
<dbReference type="KEGG" id="mja:MJ_0293"/>
<dbReference type="eggNOG" id="arCOG01891">
    <property type="taxonomic scope" value="Archaea"/>
</dbReference>
<dbReference type="HOGENOM" id="CLU_049131_1_3_2"/>
<dbReference type="InParanoid" id="Q57741"/>
<dbReference type="PhylomeDB" id="Q57741"/>
<dbReference type="Proteomes" id="UP000000805">
    <property type="component" value="Chromosome"/>
</dbReference>
<dbReference type="GO" id="GO:0005737">
    <property type="term" value="C:cytoplasm"/>
    <property type="evidence" value="ECO:0000318"/>
    <property type="project" value="GO_Central"/>
</dbReference>
<dbReference type="GO" id="GO:0005524">
    <property type="term" value="F:ATP binding"/>
    <property type="evidence" value="ECO:0007669"/>
    <property type="project" value="UniProtKB-UniRule"/>
</dbReference>
<dbReference type="GO" id="GO:0004798">
    <property type="term" value="F:dTMP kinase activity"/>
    <property type="evidence" value="ECO:0000318"/>
    <property type="project" value="GO_Central"/>
</dbReference>
<dbReference type="GO" id="GO:0006233">
    <property type="term" value="P:dTDP biosynthetic process"/>
    <property type="evidence" value="ECO:0000318"/>
    <property type="project" value="GO_Central"/>
</dbReference>
<dbReference type="GO" id="GO:0006235">
    <property type="term" value="P:dTTP biosynthetic process"/>
    <property type="evidence" value="ECO:0000318"/>
    <property type="project" value="GO_Central"/>
</dbReference>
<dbReference type="GO" id="GO:0006227">
    <property type="term" value="P:dUDP biosynthetic process"/>
    <property type="evidence" value="ECO:0000318"/>
    <property type="project" value="GO_Central"/>
</dbReference>
<dbReference type="CDD" id="cd01672">
    <property type="entry name" value="TMPK"/>
    <property type="match status" value="1"/>
</dbReference>
<dbReference type="Gene3D" id="3.40.50.300">
    <property type="entry name" value="P-loop containing nucleotide triphosphate hydrolases"/>
    <property type="match status" value="1"/>
</dbReference>
<dbReference type="HAMAP" id="MF_00165">
    <property type="entry name" value="Thymidylate_kinase"/>
    <property type="match status" value="1"/>
</dbReference>
<dbReference type="InterPro" id="IPR027417">
    <property type="entry name" value="P-loop_NTPase"/>
</dbReference>
<dbReference type="InterPro" id="IPR039430">
    <property type="entry name" value="Thymidylate_kin-like_dom"/>
</dbReference>
<dbReference type="InterPro" id="IPR018095">
    <property type="entry name" value="Thymidylate_kin_CS"/>
</dbReference>
<dbReference type="InterPro" id="IPR018094">
    <property type="entry name" value="Thymidylate_kinase"/>
</dbReference>
<dbReference type="NCBIfam" id="TIGR00041">
    <property type="entry name" value="DTMP_kinase"/>
    <property type="match status" value="1"/>
</dbReference>
<dbReference type="PANTHER" id="PTHR10344">
    <property type="entry name" value="THYMIDYLATE KINASE"/>
    <property type="match status" value="1"/>
</dbReference>
<dbReference type="PANTHER" id="PTHR10344:SF4">
    <property type="entry name" value="UMP-CMP KINASE 2, MITOCHONDRIAL"/>
    <property type="match status" value="1"/>
</dbReference>
<dbReference type="Pfam" id="PF02223">
    <property type="entry name" value="Thymidylate_kin"/>
    <property type="match status" value="1"/>
</dbReference>
<dbReference type="SUPFAM" id="SSF52540">
    <property type="entry name" value="P-loop containing nucleoside triphosphate hydrolases"/>
    <property type="match status" value="1"/>
</dbReference>
<dbReference type="PROSITE" id="PS01331">
    <property type="entry name" value="THYMIDYLATE_KINASE"/>
    <property type="match status" value="1"/>
</dbReference>
<name>KTHY_METJA</name>
<proteinExistence type="inferred from homology"/>
<keyword id="KW-0067">ATP-binding</keyword>
<keyword id="KW-0418">Kinase</keyword>
<keyword id="KW-0545">Nucleotide biosynthesis</keyword>
<keyword id="KW-0547">Nucleotide-binding</keyword>
<keyword id="KW-1185">Reference proteome</keyword>
<keyword id="KW-0808">Transferase</keyword>
<reference key="1">
    <citation type="journal article" date="1996" name="Science">
        <title>Complete genome sequence of the methanogenic archaeon, Methanococcus jannaschii.</title>
        <authorList>
            <person name="Bult C.J."/>
            <person name="White O."/>
            <person name="Olsen G.J."/>
            <person name="Zhou L."/>
            <person name="Fleischmann R.D."/>
            <person name="Sutton G.G."/>
            <person name="Blake J.A."/>
            <person name="FitzGerald L.M."/>
            <person name="Clayton R.A."/>
            <person name="Gocayne J.D."/>
            <person name="Kerlavage A.R."/>
            <person name="Dougherty B.A."/>
            <person name="Tomb J.-F."/>
            <person name="Adams M.D."/>
            <person name="Reich C.I."/>
            <person name="Overbeek R."/>
            <person name="Kirkness E.F."/>
            <person name="Weinstock K.G."/>
            <person name="Merrick J.M."/>
            <person name="Glodek A."/>
            <person name="Scott J.L."/>
            <person name="Geoghagen N.S.M."/>
            <person name="Weidman J.F."/>
            <person name="Fuhrmann J.L."/>
            <person name="Nguyen D."/>
            <person name="Utterback T.R."/>
            <person name="Kelley J.M."/>
            <person name="Peterson J.D."/>
            <person name="Sadow P.W."/>
            <person name="Hanna M.C."/>
            <person name="Cotton M.D."/>
            <person name="Roberts K.M."/>
            <person name="Hurst M.A."/>
            <person name="Kaine B.P."/>
            <person name="Borodovsky M."/>
            <person name="Klenk H.-P."/>
            <person name="Fraser C.M."/>
            <person name="Smith H.O."/>
            <person name="Woese C.R."/>
            <person name="Venter J.C."/>
        </authorList>
    </citation>
    <scope>NUCLEOTIDE SEQUENCE [LARGE SCALE GENOMIC DNA]</scope>
    <source>
        <strain>ATCC 43067 / DSM 2661 / JAL-1 / JCM 10045 / NBRC 100440</strain>
    </source>
</reference>
<gene>
    <name type="primary">tmk</name>
    <name type="ordered locus">MJ0293</name>
</gene>